<sequence length="952" mass="101283">MSVPNSSNKQTCFTARHIGPNSEDVATMLAVIGVESLDDLAAKAVPSDILDNVTDTGVAPGLDRLPPPATESETLAELGALARANTVAVSMIGQGYYDTLTPAVLSRNILENPAWYTPYTPYQPEISQGRLEALLNFQTLVSDLTGLEIANASMLDEGTAAAEAMTLMYRAARSTASRVVVDVDVFAQTVAVFATRAKPLGIDIVVADLREGLPDGEFFGVITQLPGASGRITDWTALIAQAHSRGALVAVGADLLALTLITPPGEIGADVAFGTTQRFGVPMGFGGPHAGYLALHTKHARQLPGRLVGVSVDSDGTPAYRLALQTREQHIRRDKATSNICTAQVLLAVMAAMYASYHGAEGLTGIARRVHAQARALAAGLSAAGVEVVHQAFFDTVLARVPGRTVQIQGAAKERGINVWLVDGDHVSVACDEATTDEHITAVLAAFAATPARASFAGPDIATRTSAFLTHPTFTKYRTETSMMRYLRALADKDIALDRSMIPLGSCTMKLNAAAEMESITWQEFTRQHPFAPVSDTPGLRRLISDLESWLVQITGYDAVSLQPNAGSQGEYAGLLAIHDYHVSRGEPHRNVCLIPSSAHGTNAASAALVGMRVVVVGCHDNGDVDLDDLRIKLSEHANRLSVLMITYPSTHGVYEHDIAEICAAVHDAGGQVYVDGANLNALVGLARPGKFGGDVSHLNLHKTFCIPHGGGGPGVGPVAVRSHLVSFLPGHPFAPELPQGQPVSSAPYGSASLLPITWAYIRMMGADGLRTASLTAIASANYIARRLDKYFPVLYTGENGMVAHECILDLRPITKSVGVTVDDVAKRLADYGFHAPTMSFPVPGTLMVEPTESESLAEIDAFCEAMIAIRGEIARVGAGEWSVEDNPLRGAPHTAECLLASDWDHPYTREEAAYPLGKAFRPKVWPPVRRIDGVYGDRNLVCSCLPVEAFV</sequence>
<keyword id="KW-0560">Oxidoreductase</keyword>
<keyword id="KW-0663">Pyridoxal phosphate</keyword>
<proteinExistence type="inferred from homology"/>
<comment type="function">
    <text evidence="1">The glycine cleavage system catalyzes the degradation of glycine. The P protein binds the alpha-amino group of glycine through its pyridoxal phosphate cofactor; CO(2) is released and the remaining methylamine moiety is then transferred to the lipoamide cofactor of the H protein.</text>
</comment>
<comment type="catalytic activity">
    <reaction evidence="1">
        <text>N(6)-[(R)-lipoyl]-L-lysyl-[glycine-cleavage complex H protein] + glycine + H(+) = N(6)-[(R)-S(8)-aminomethyldihydrolipoyl]-L-lysyl-[glycine-cleavage complex H protein] + CO2</text>
        <dbReference type="Rhea" id="RHEA:24304"/>
        <dbReference type="Rhea" id="RHEA-COMP:10494"/>
        <dbReference type="Rhea" id="RHEA-COMP:10495"/>
        <dbReference type="ChEBI" id="CHEBI:15378"/>
        <dbReference type="ChEBI" id="CHEBI:16526"/>
        <dbReference type="ChEBI" id="CHEBI:57305"/>
        <dbReference type="ChEBI" id="CHEBI:83099"/>
        <dbReference type="ChEBI" id="CHEBI:83143"/>
        <dbReference type="EC" id="1.4.4.2"/>
    </reaction>
</comment>
<comment type="cofactor">
    <cofactor evidence="1">
        <name>pyridoxal 5'-phosphate</name>
        <dbReference type="ChEBI" id="CHEBI:597326"/>
    </cofactor>
</comment>
<comment type="subunit">
    <text evidence="1">The glycine cleavage system is composed of four proteins: P, T, L and H.</text>
</comment>
<comment type="similarity">
    <text evidence="1">Belongs to the GcvP family.</text>
</comment>
<gene>
    <name evidence="1" type="primary">gcvP</name>
    <name type="ordered locus">MLBr02072</name>
</gene>
<feature type="chain" id="PRO_1000147967" description="Glycine dehydrogenase (decarboxylating)">
    <location>
        <begin position="1"/>
        <end position="952"/>
    </location>
</feature>
<feature type="modified residue" description="N6-(pyridoxal phosphate)lysine" evidence="1">
    <location>
        <position position="703"/>
    </location>
</feature>
<dbReference type="EC" id="1.4.4.2" evidence="1"/>
<dbReference type="EMBL" id="FM211192">
    <property type="protein sequence ID" value="CAR72169.1"/>
    <property type="molecule type" value="Genomic_DNA"/>
</dbReference>
<dbReference type="SMR" id="B8ZSN5"/>
<dbReference type="KEGG" id="mlb:MLBr02072"/>
<dbReference type="HOGENOM" id="CLU_004620_3_2_11"/>
<dbReference type="Proteomes" id="UP000006900">
    <property type="component" value="Chromosome"/>
</dbReference>
<dbReference type="GO" id="GO:0005829">
    <property type="term" value="C:cytosol"/>
    <property type="evidence" value="ECO:0007669"/>
    <property type="project" value="TreeGrafter"/>
</dbReference>
<dbReference type="GO" id="GO:0005960">
    <property type="term" value="C:glycine cleavage complex"/>
    <property type="evidence" value="ECO:0007669"/>
    <property type="project" value="TreeGrafter"/>
</dbReference>
<dbReference type="GO" id="GO:0016594">
    <property type="term" value="F:glycine binding"/>
    <property type="evidence" value="ECO:0007669"/>
    <property type="project" value="TreeGrafter"/>
</dbReference>
<dbReference type="GO" id="GO:0004375">
    <property type="term" value="F:glycine dehydrogenase (decarboxylating) activity"/>
    <property type="evidence" value="ECO:0007669"/>
    <property type="project" value="UniProtKB-EC"/>
</dbReference>
<dbReference type="GO" id="GO:0030170">
    <property type="term" value="F:pyridoxal phosphate binding"/>
    <property type="evidence" value="ECO:0007669"/>
    <property type="project" value="TreeGrafter"/>
</dbReference>
<dbReference type="GO" id="GO:0019464">
    <property type="term" value="P:glycine decarboxylation via glycine cleavage system"/>
    <property type="evidence" value="ECO:0007669"/>
    <property type="project" value="UniProtKB-UniRule"/>
</dbReference>
<dbReference type="CDD" id="cd00613">
    <property type="entry name" value="GDC-P"/>
    <property type="match status" value="2"/>
</dbReference>
<dbReference type="FunFam" id="3.90.1150.10:FF:000059">
    <property type="entry name" value="Glycine dehydrogenase (decarboxylating)"/>
    <property type="match status" value="1"/>
</dbReference>
<dbReference type="FunFam" id="3.40.640.10:FF:000005">
    <property type="entry name" value="Glycine dehydrogenase (decarboxylating), mitochondrial"/>
    <property type="match status" value="1"/>
</dbReference>
<dbReference type="FunFam" id="3.40.640.10:FF:000007">
    <property type="entry name" value="glycine dehydrogenase (Decarboxylating), mitochondrial"/>
    <property type="match status" value="1"/>
</dbReference>
<dbReference type="Gene3D" id="3.90.1150.10">
    <property type="entry name" value="Aspartate Aminotransferase, domain 1"/>
    <property type="match status" value="2"/>
</dbReference>
<dbReference type="Gene3D" id="3.40.640.10">
    <property type="entry name" value="Type I PLP-dependent aspartate aminotransferase-like (Major domain)"/>
    <property type="match status" value="2"/>
</dbReference>
<dbReference type="HAMAP" id="MF_00711">
    <property type="entry name" value="GcvP"/>
    <property type="match status" value="1"/>
</dbReference>
<dbReference type="InterPro" id="IPR003437">
    <property type="entry name" value="GcvP"/>
</dbReference>
<dbReference type="InterPro" id="IPR049316">
    <property type="entry name" value="GDC-P_C"/>
</dbReference>
<dbReference type="InterPro" id="IPR049315">
    <property type="entry name" value="GDC-P_N"/>
</dbReference>
<dbReference type="InterPro" id="IPR020581">
    <property type="entry name" value="GDC_P"/>
</dbReference>
<dbReference type="InterPro" id="IPR015424">
    <property type="entry name" value="PyrdxlP-dep_Trfase"/>
</dbReference>
<dbReference type="InterPro" id="IPR015421">
    <property type="entry name" value="PyrdxlP-dep_Trfase_major"/>
</dbReference>
<dbReference type="InterPro" id="IPR015422">
    <property type="entry name" value="PyrdxlP-dep_Trfase_small"/>
</dbReference>
<dbReference type="NCBIfam" id="TIGR00461">
    <property type="entry name" value="gcvP"/>
    <property type="match status" value="1"/>
</dbReference>
<dbReference type="PANTHER" id="PTHR11773:SF1">
    <property type="entry name" value="GLYCINE DEHYDROGENASE (DECARBOXYLATING), MITOCHONDRIAL"/>
    <property type="match status" value="1"/>
</dbReference>
<dbReference type="PANTHER" id="PTHR11773">
    <property type="entry name" value="GLYCINE DEHYDROGENASE, DECARBOXYLATING"/>
    <property type="match status" value="1"/>
</dbReference>
<dbReference type="Pfam" id="PF21478">
    <property type="entry name" value="GcvP2_C"/>
    <property type="match status" value="1"/>
</dbReference>
<dbReference type="Pfam" id="PF02347">
    <property type="entry name" value="GDC-P"/>
    <property type="match status" value="2"/>
</dbReference>
<dbReference type="SUPFAM" id="SSF53383">
    <property type="entry name" value="PLP-dependent transferases"/>
    <property type="match status" value="2"/>
</dbReference>
<evidence type="ECO:0000255" key="1">
    <source>
        <dbReference type="HAMAP-Rule" id="MF_00711"/>
    </source>
</evidence>
<protein>
    <recommendedName>
        <fullName evidence="1">Glycine dehydrogenase (decarboxylating)</fullName>
        <ecNumber evidence="1">1.4.4.2</ecNumber>
    </recommendedName>
    <alternativeName>
        <fullName evidence="1">Glycine cleavage system P-protein</fullName>
    </alternativeName>
    <alternativeName>
        <fullName evidence="1">Glycine decarboxylase</fullName>
    </alternativeName>
    <alternativeName>
        <fullName evidence="1">Glycine dehydrogenase (aminomethyl-transferring)</fullName>
    </alternativeName>
</protein>
<reference key="1">
    <citation type="journal article" date="2009" name="Nat. Genet.">
        <title>Comparative genomic and phylogeographic analysis of Mycobacterium leprae.</title>
        <authorList>
            <person name="Monot M."/>
            <person name="Honore N."/>
            <person name="Garnier T."/>
            <person name="Zidane N."/>
            <person name="Sherafi D."/>
            <person name="Paniz-Mondolfi A."/>
            <person name="Matsuoka M."/>
            <person name="Taylor G.M."/>
            <person name="Donoghue H.D."/>
            <person name="Bouwman A."/>
            <person name="Mays S."/>
            <person name="Watson C."/>
            <person name="Lockwood D."/>
            <person name="Khamispour A."/>
            <person name="Dowlati Y."/>
            <person name="Jianping S."/>
            <person name="Rea T.H."/>
            <person name="Vera-Cabrera L."/>
            <person name="Stefani M.M."/>
            <person name="Banu S."/>
            <person name="Macdonald M."/>
            <person name="Sapkota B.R."/>
            <person name="Spencer J.S."/>
            <person name="Thomas J."/>
            <person name="Harshman K."/>
            <person name="Singh P."/>
            <person name="Busso P."/>
            <person name="Gattiker A."/>
            <person name="Rougemont J."/>
            <person name="Brennan P.J."/>
            <person name="Cole S.T."/>
        </authorList>
    </citation>
    <scope>NUCLEOTIDE SEQUENCE [LARGE SCALE GENOMIC DNA]</scope>
    <source>
        <strain>Br4923</strain>
    </source>
</reference>
<name>GCSP_MYCLB</name>
<organism>
    <name type="scientific">Mycobacterium leprae (strain Br4923)</name>
    <dbReference type="NCBI Taxonomy" id="561304"/>
    <lineage>
        <taxon>Bacteria</taxon>
        <taxon>Bacillati</taxon>
        <taxon>Actinomycetota</taxon>
        <taxon>Actinomycetes</taxon>
        <taxon>Mycobacteriales</taxon>
        <taxon>Mycobacteriaceae</taxon>
        <taxon>Mycobacterium</taxon>
    </lineage>
</organism>
<accession>B8ZSN5</accession>